<evidence type="ECO:0000255" key="1">
    <source>
        <dbReference type="HAMAP-Rule" id="MF_01201"/>
    </source>
</evidence>
<feature type="chain" id="PRO_1000164620" description="Alanine racemase">
    <location>
        <begin position="1"/>
        <end position="358"/>
    </location>
</feature>
<feature type="active site" description="Proton acceptor; specific for D-alanine" evidence="1">
    <location>
        <position position="35"/>
    </location>
</feature>
<feature type="active site" description="Proton acceptor; specific for L-alanine" evidence="1">
    <location>
        <position position="255"/>
    </location>
</feature>
<feature type="binding site" evidence="1">
    <location>
        <position position="130"/>
    </location>
    <ligand>
        <name>substrate</name>
    </ligand>
</feature>
<feature type="binding site" evidence="1">
    <location>
        <position position="303"/>
    </location>
    <ligand>
        <name>substrate</name>
    </ligand>
</feature>
<feature type="modified residue" description="N6-(pyridoxal phosphate)lysine" evidence="1">
    <location>
        <position position="35"/>
    </location>
</feature>
<sequence>MKPFPRAEISSSALQNNLAVLRQQASRSQVMAVVKANGYGHGLLNVANCLHTADGFGLARLEEALELRAGGVKARLLLLEGFFRSTDLPLLVAHDIDTVVHHESQIEMLEQATLSKPVTVWLKVDSGMHRLGVTPEQFTQVYARLMACDNVAKPIHLMTHFACADEPENHYTQVQMQTFNQLTADLPGFRTLANSAGALYWPKSQGDWIRPGIALYGVSPVTGDCGANHGLIPAMNLVSRLIAVRDHKAGQPVGYGCYWTAKQDTRLGVVAIGYGDGYPRNAPEGTPVWVNGRRVPIVGRVSMDMLTVDLGADATDLVGDEALLWGAALPVEEVAEHIGTIAYELVTKLTPRVAVCLA</sequence>
<comment type="function">
    <text evidence="1">Catalyzes the interconversion of L-alanine and D-alanine. May also act on other amino acids.</text>
</comment>
<comment type="catalytic activity">
    <reaction evidence="1">
        <text>L-alanine = D-alanine</text>
        <dbReference type="Rhea" id="RHEA:20249"/>
        <dbReference type="ChEBI" id="CHEBI:57416"/>
        <dbReference type="ChEBI" id="CHEBI:57972"/>
        <dbReference type="EC" id="5.1.1.1"/>
    </reaction>
</comment>
<comment type="cofactor">
    <cofactor evidence="1">
        <name>pyridoxal 5'-phosphate</name>
        <dbReference type="ChEBI" id="CHEBI:597326"/>
    </cofactor>
</comment>
<comment type="pathway">
    <text evidence="1">Amino-acid biosynthesis; D-alanine biosynthesis; D-alanine from L-alanine: step 1/1.</text>
</comment>
<comment type="similarity">
    <text evidence="1">Belongs to the alanine racemase family.</text>
</comment>
<keyword id="KW-0413">Isomerase</keyword>
<keyword id="KW-0663">Pyridoxal phosphate</keyword>
<dbReference type="EC" id="5.1.1.1" evidence="1"/>
<dbReference type="EMBL" id="CP000469">
    <property type="protein sequence ID" value="ABK46952.1"/>
    <property type="molecule type" value="Genomic_DNA"/>
</dbReference>
<dbReference type="RefSeq" id="WP_011715878.1">
    <property type="nucleotide sequence ID" value="NC_008577.1"/>
</dbReference>
<dbReference type="SMR" id="A0KT33"/>
<dbReference type="STRING" id="94122.Shewana3_0714"/>
<dbReference type="GeneID" id="94726697"/>
<dbReference type="KEGG" id="shn:Shewana3_0714"/>
<dbReference type="eggNOG" id="COG0787">
    <property type="taxonomic scope" value="Bacteria"/>
</dbReference>
<dbReference type="HOGENOM" id="CLU_028393_1_0_6"/>
<dbReference type="OrthoDB" id="9813814at2"/>
<dbReference type="UniPathway" id="UPA00042">
    <property type="reaction ID" value="UER00497"/>
</dbReference>
<dbReference type="Proteomes" id="UP000002589">
    <property type="component" value="Chromosome"/>
</dbReference>
<dbReference type="GO" id="GO:0005829">
    <property type="term" value="C:cytosol"/>
    <property type="evidence" value="ECO:0007669"/>
    <property type="project" value="TreeGrafter"/>
</dbReference>
<dbReference type="GO" id="GO:0008784">
    <property type="term" value="F:alanine racemase activity"/>
    <property type="evidence" value="ECO:0007669"/>
    <property type="project" value="UniProtKB-UniRule"/>
</dbReference>
<dbReference type="GO" id="GO:0030170">
    <property type="term" value="F:pyridoxal phosphate binding"/>
    <property type="evidence" value="ECO:0007669"/>
    <property type="project" value="UniProtKB-UniRule"/>
</dbReference>
<dbReference type="GO" id="GO:0030632">
    <property type="term" value="P:D-alanine biosynthetic process"/>
    <property type="evidence" value="ECO:0007669"/>
    <property type="project" value="UniProtKB-UniRule"/>
</dbReference>
<dbReference type="CDD" id="cd06827">
    <property type="entry name" value="PLPDE_III_AR_proteobact"/>
    <property type="match status" value="1"/>
</dbReference>
<dbReference type="FunFam" id="2.40.37.10:FF:000002">
    <property type="entry name" value="Alanine racemase"/>
    <property type="match status" value="1"/>
</dbReference>
<dbReference type="FunFam" id="3.20.20.10:FF:000002">
    <property type="entry name" value="Alanine racemase"/>
    <property type="match status" value="1"/>
</dbReference>
<dbReference type="Gene3D" id="3.20.20.10">
    <property type="entry name" value="Alanine racemase"/>
    <property type="match status" value="1"/>
</dbReference>
<dbReference type="Gene3D" id="2.40.37.10">
    <property type="entry name" value="Lyase, Ornithine Decarboxylase, Chain A, domain 1"/>
    <property type="match status" value="1"/>
</dbReference>
<dbReference type="HAMAP" id="MF_01201">
    <property type="entry name" value="Ala_racemase"/>
    <property type="match status" value="1"/>
</dbReference>
<dbReference type="InterPro" id="IPR000821">
    <property type="entry name" value="Ala_racemase"/>
</dbReference>
<dbReference type="InterPro" id="IPR009006">
    <property type="entry name" value="Ala_racemase/Decarboxylase_C"/>
</dbReference>
<dbReference type="InterPro" id="IPR011079">
    <property type="entry name" value="Ala_racemase_C"/>
</dbReference>
<dbReference type="InterPro" id="IPR001608">
    <property type="entry name" value="Ala_racemase_N"/>
</dbReference>
<dbReference type="InterPro" id="IPR020622">
    <property type="entry name" value="Ala_racemase_pyridoxalP-BS"/>
</dbReference>
<dbReference type="InterPro" id="IPR029066">
    <property type="entry name" value="PLP-binding_barrel"/>
</dbReference>
<dbReference type="NCBIfam" id="TIGR00492">
    <property type="entry name" value="alr"/>
    <property type="match status" value="1"/>
</dbReference>
<dbReference type="PANTHER" id="PTHR30511">
    <property type="entry name" value="ALANINE RACEMASE"/>
    <property type="match status" value="1"/>
</dbReference>
<dbReference type="PANTHER" id="PTHR30511:SF4">
    <property type="entry name" value="ALANINE RACEMASE, BIOSYNTHETIC"/>
    <property type="match status" value="1"/>
</dbReference>
<dbReference type="Pfam" id="PF00842">
    <property type="entry name" value="Ala_racemase_C"/>
    <property type="match status" value="1"/>
</dbReference>
<dbReference type="Pfam" id="PF01168">
    <property type="entry name" value="Ala_racemase_N"/>
    <property type="match status" value="1"/>
</dbReference>
<dbReference type="PRINTS" id="PR00992">
    <property type="entry name" value="ALARACEMASE"/>
</dbReference>
<dbReference type="SMART" id="SM01005">
    <property type="entry name" value="Ala_racemase_C"/>
    <property type="match status" value="1"/>
</dbReference>
<dbReference type="SUPFAM" id="SSF50621">
    <property type="entry name" value="Alanine racemase C-terminal domain-like"/>
    <property type="match status" value="1"/>
</dbReference>
<dbReference type="SUPFAM" id="SSF51419">
    <property type="entry name" value="PLP-binding barrel"/>
    <property type="match status" value="1"/>
</dbReference>
<dbReference type="PROSITE" id="PS00395">
    <property type="entry name" value="ALANINE_RACEMASE"/>
    <property type="match status" value="1"/>
</dbReference>
<protein>
    <recommendedName>
        <fullName evidence="1">Alanine racemase</fullName>
        <ecNumber evidence="1">5.1.1.1</ecNumber>
    </recommendedName>
</protein>
<gene>
    <name type="primary">alr</name>
    <name type="ordered locus">Shewana3_0714</name>
</gene>
<reference key="1">
    <citation type="submission" date="2006-09" db="EMBL/GenBank/DDBJ databases">
        <title>Complete sequence of chromosome 1 of Shewanella sp. ANA-3.</title>
        <authorList>
            <person name="Copeland A."/>
            <person name="Lucas S."/>
            <person name="Lapidus A."/>
            <person name="Barry K."/>
            <person name="Detter J.C."/>
            <person name="Glavina del Rio T."/>
            <person name="Hammon N."/>
            <person name="Israni S."/>
            <person name="Dalin E."/>
            <person name="Tice H."/>
            <person name="Pitluck S."/>
            <person name="Chertkov O."/>
            <person name="Brettin T."/>
            <person name="Bruce D."/>
            <person name="Han C."/>
            <person name="Tapia R."/>
            <person name="Gilna P."/>
            <person name="Schmutz J."/>
            <person name="Larimer F."/>
            <person name="Land M."/>
            <person name="Hauser L."/>
            <person name="Kyrpides N."/>
            <person name="Kim E."/>
            <person name="Newman D."/>
            <person name="Salticov C."/>
            <person name="Konstantinidis K."/>
            <person name="Klappenback J."/>
            <person name="Tiedje J."/>
            <person name="Richardson P."/>
        </authorList>
    </citation>
    <scope>NUCLEOTIDE SEQUENCE [LARGE SCALE GENOMIC DNA]</scope>
    <source>
        <strain>ANA-3</strain>
    </source>
</reference>
<proteinExistence type="inferred from homology"/>
<organism>
    <name type="scientific">Shewanella sp. (strain ANA-3)</name>
    <dbReference type="NCBI Taxonomy" id="94122"/>
    <lineage>
        <taxon>Bacteria</taxon>
        <taxon>Pseudomonadati</taxon>
        <taxon>Pseudomonadota</taxon>
        <taxon>Gammaproteobacteria</taxon>
        <taxon>Alteromonadales</taxon>
        <taxon>Shewanellaceae</taxon>
        <taxon>Shewanella</taxon>
    </lineage>
</organism>
<accession>A0KT33</accession>
<name>ALR_SHESA</name>